<accession>Q6GGC5</accession>
<protein>
    <recommendedName>
        <fullName evidence="1">Small ribosomal subunit protein bS21</fullName>
    </recommendedName>
    <alternativeName>
        <fullName evidence="2">30S ribosomal protein S21</fullName>
    </alternativeName>
</protein>
<sequence>MSKTVVRKNESLEDALRRFKRSVSKSGTIQEVRKREFYEKPSVKRKKKSEAARKRKFK</sequence>
<feature type="chain" id="PRO_0000178376" description="Small ribosomal subunit protein bS21">
    <location>
        <begin position="1"/>
        <end position="58"/>
    </location>
</feature>
<proteinExistence type="inferred from homology"/>
<comment type="similarity">
    <text evidence="1">Belongs to the bacterial ribosomal protein bS21 family.</text>
</comment>
<keyword id="KW-0687">Ribonucleoprotein</keyword>
<keyword id="KW-0689">Ribosomal protein</keyword>
<reference key="1">
    <citation type="journal article" date="2004" name="Proc. Natl. Acad. Sci. U.S.A.">
        <title>Complete genomes of two clinical Staphylococcus aureus strains: evidence for the rapid evolution of virulence and drug resistance.</title>
        <authorList>
            <person name="Holden M.T.G."/>
            <person name="Feil E.J."/>
            <person name="Lindsay J.A."/>
            <person name="Peacock S.J."/>
            <person name="Day N.P.J."/>
            <person name="Enright M.C."/>
            <person name="Foster T.J."/>
            <person name="Moore C.E."/>
            <person name="Hurst L."/>
            <person name="Atkin R."/>
            <person name="Barron A."/>
            <person name="Bason N."/>
            <person name="Bentley S.D."/>
            <person name="Chillingworth C."/>
            <person name="Chillingworth T."/>
            <person name="Churcher C."/>
            <person name="Clark L."/>
            <person name="Corton C."/>
            <person name="Cronin A."/>
            <person name="Doggett J."/>
            <person name="Dowd L."/>
            <person name="Feltwell T."/>
            <person name="Hance Z."/>
            <person name="Harris B."/>
            <person name="Hauser H."/>
            <person name="Holroyd S."/>
            <person name="Jagels K."/>
            <person name="James K.D."/>
            <person name="Lennard N."/>
            <person name="Line A."/>
            <person name="Mayes R."/>
            <person name="Moule S."/>
            <person name="Mungall K."/>
            <person name="Ormond D."/>
            <person name="Quail M.A."/>
            <person name="Rabbinowitsch E."/>
            <person name="Rutherford K.M."/>
            <person name="Sanders M."/>
            <person name="Sharp S."/>
            <person name="Simmonds M."/>
            <person name="Stevens K."/>
            <person name="Whitehead S."/>
            <person name="Barrell B.G."/>
            <person name="Spratt B.G."/>
            <person name="Parkhill J."/>
        </authorList>
    </citation>
    <scope>NUCLEOTIDE SEQUENCE [LARGE SCALE GENOMIC DNA]</scope>
    <source>
        <strain>MRSA252</strain>
    </source>
</reference>
<gene>
    <name evidence="1" type="primary">rpsU</name>
    <name type="ordered locus">SAR1652</name>
</gene>
<dbReference type="EMBL" id="BX571856">
    <property type="protein sequence ID" value="CAG40647.1"/>
    <property type="molecule type" value="Genomic_DNA"/>
</dbReference>
<dbReference type="RefSeq" id="WP_000048060.1">
    <property type="nucleotide sequence ID" value="NC_002952.2"/>
</dbReference>
<dbReference type="SMR" id="Q6GGC5"/>
<dbReference type="GeneID" id="98345946"/>
<dbReference type="KEGG" id="sar:SAR1652"/>
<dbReference type="HOGENOM" id="CLU_159258_3_2_9"/>
<dbReference type="Proteomes" id="UP000000596">
    <property type="component" value="Chromosome"/>
</dbReference>
<dbReference type="GO" id="GO:1990904">
    <property type="term" value="C:ribonucleoprotein complex"/>
    <property type="evidence" value="ECO:0007669"/>
    <property type="project" value="UniProtKB-KW"/>
</dbReference>
<dbReference type="GO" id="GO:0005840">
    <property type="term" value="C:ribosome"/>
    <property type="evidence" value="ECO:0007669"/>
    <property type="project" value="UniProtKB-KW"/>
</dbReference>
<dbReference type="GO" id="GO:0003735">
    <property type="term" value="F:structural constituent of ribosome"/>
    <property type="evidence" value="ECO:0007669"/>
    <property type="project" value="InterPro"/>
</dbReference>
<dbReference type="GO" id="GO:0006412">
    <property type="term" value="P:translation"/>
    <property type="evidence" value="ECO:0007669"/>
    <property type="project" value="UniProtKB-UniRule"/>
</dbReference>
<dbReference type="Gene3D" id="1.20.5.1150">
    <property type="entry name" value="Ribosomal protein S8"/>
    <property type="match status" value="1"/>
</dbReference>
<dbReference type="HAMAP" id="MF_00358">
    <property type="entry name" value="Ribosomal_bS21"/>
    <property type="match status" value="1"/>
</dbReference>
<dbReference type="InterPro" id="IPR001911">
    <property type="entry name" value="Ribosomal_bS21"/>
</dbReference>
<dbReference type="InterPro" id="IPR018278">
    <property type="entry name" value="Ribosomal_bS21_CS"/>
</dbReference>
<dbReference type="InterPro" id="IPR038380">
    <property type="entry name" value="Ribosomal_bS21_sf"/>
</dbReference>
<dbReference type="NCBIfam" id="TIGR00030">
    <property type="entry name" value="S21p"/>
    <property type="match status" value="1"/>
</dbReference>
<dbReference type="PANTHER" id="PTHR21109">
    <property type="entry name" value="MITOCHONDRIAL 28S RIBOSOMAL PROTEIN S21"/>
    <property type="match status" value="1"/>
</dbReference>
<dbReference type="PANTHER" id="PTHR21109:SF22">
    <property type="entry name" value="SMALL RIBOSOMAL SUBUNIT PROTEIN BS21"/>
    <property type="match status" value="1"/>
</dbReference>
<dbReference type="Pfam" id="PF01165">
    <property type="entry name" value="Ribosomal_S21"/>
    <property type="match status" value="1"/>
</dbReference>
<dbReference type="PRINTS" id="PR00976">
    <property type="entry name" value="RIBOSOMALS21"/>
</dbReference>
<dbReference type="PROSITE" id="PS01181">
    <property type="entry name" value="RIBOSOMAL_S21"/>
    <property type="match status" value="1"/>
</dbReference>
<evidence type="ECO:0000255" key="1">
    <source>
        <dbReference type="HAMAP-Rule" id="MF_00358"/>
    </source>
</evidence>
<evidence type="ECO:0000305" key="2"/>
<organism>
    <name type="scientific">Staphylococcus aureus (strain MRSA252)</name>
    <dbReference type="NCBI Taxonomy" id="282458"/>
    <lineage>
        <taxon>Bacteria</taxon>
        <taxon>Bacillati</taxon>
        <taxon>Bacillota</taxon>
        <taxon>Bacilli</taxon>
        <taxon>Bacillales</taxon>
        <taxon>Staphylococcaceae</taxon>
        <taxon>Staphylococcus</taxon>
    </lineage>
</organism>
<name>RS21_STAAR</name>